<comment type="function">
    <text evidence="1">Interacts specifically with a number of opioid ligands. Receptor for neuropeptides B and W, which may be involved in neuroendocrine system regulation, food intake and the organization of other signals (By similarity).</text>
</comment>
<comment type="subcellular location">
    <subcellularLocation>
        <location>Cell membrane</location>
        <topology>Multi-pass membrane protein</topology>
    </subcellularLocation>
</comment>
<comment type="similarity">
    <text evidence="3">Belongs to the G-protein coupled receptor 1 family.</text>
</comment>
<sequence>MMEATGLEGLESTSSPCPGSTGTGLSWDNGTRHNATFPEPLPALYVLLPVVYSVICAVGLVGNAAVICVILRAPKMKTVTHVFILNLAIADGLFTLVLPTNIAEHLLQRWPFGEVLCKLVLAIDHCNIFSSVYFLAAMSIDRYLVVLATARSRRMPRRTVHRAKVASLCVWLGVTVAVLPFLTFAGVYNNELQVTSCGLSFPRPERAWFQASRIYTLVLGFVVPMCTLCVLYADLLRRLRALRLHSGAKALGKAKRKVSLLVLAVLAVGLLCWTPFHLASIVALTTDLPQTPLVIIVSYVVTSLSYTSSCLNPFLYAFLDHSFRKSLRTACRCQGA</sequence>
<gene>
    <name type="primary">NPBWR2</name>
    <name type="synonym">GPR8</name>
</gene>
<feature type="chain" id="PRO_0000069521" description="Neuropeptides B/W receptor type 2">
    <location>
        <begin position="1"/>
        <end position="336"/>
    </location>
</feature>
<feature type="topological domain" description="Extracellular" evidence="2">
    <location>
        <begin position="1"/>
        <end position="45"/>
    </location>
</feature>
<feature type="transmembrane region" description="Helical; Name=1" evidence="2">
    <location>
        <begin position="46"/>
        <end position="68"/>
    </location>
</feature>
<feature type="topological domain" description="Cytoplasmic" evidence="2">
    <location>
        <begin position="69"/>
        <end position="80"/>
    </location>
</feature>
<feature type="transmembrane region" description="Helical; Name=2" evidence="2">
    <location>
        <begin position="81"/>
        <end position="103"/>
    </location>
</feature>
<feature type="topological domain" description="Extracellular" evidence="2">
    <location>
        <begin position="104"/>
        <end position="127"/>
    </location>
</feature>
<feature type="transmembrane region" description="Helical; Name=3" evidence="2">
    <location>
        <begin position="128"/>
        <end position="146"/>
    </location>
</feature>
<feature type="topological domain" description="Cytoplasmic" evidence="2">
    <location>
        <begin position="147"/>
        <end position="165"/>
    </location>
</feature>
<feature type="transmembrane region" description="Helical; Name=4" evidence="2">
    <location>
        <begin position="166"/>
        <end position="188"/>
    </location>
</feature>
<feature type="topological domain" description="Extracellular" evidence="2">
    <location>
        <begin position="189"/>
        <end position="213"/>
    </location>
</feature>
<feature type="transmembrane region" description="Helical; Name=5" evidence="2">
    <location>
        <begin position="214"/>
        <end position="236"/>
    </location>
</feature>
<feature type="topological domain" description="Cytoplasmic" evidence="2">
    <location>
        <begin position="237"/>
        <end position="256"/>
    </location>
</feature>
<feature type="transmembrane region" description="Helical; Name=6" evidence="2">
    <location>
        <begin position="257"/>
        <end position="279"/>
    </location>
</feature>
<feature type="topological domain" description="Extracellular" evidence="2">
    <location>
        <begin position="280"/>
        <end position="293"/>
    </location>
</feature>
<feature type="transmembrane region" description="Helical; Name=7" evidence="2">
    <location>
        <begin position="294"/>
        <end position="316"/>
    </location>
</feature>
<feature type="topological domain" description="Cytoplasmic" evidence="2">
    <location>
        <begin position="317"/>
        <end position="336"/>
    </location>
</feature>
<feature type="region of interest" description="Disordered" evidence="4">
    <location>
        <begin position="1"/>
        <end position="25"/>
    </location>
</feature>
<feature type="compositionally biased region" description="Low complexity" evidence="4">
    <location>
        <begin position="12"/>
        <end position="25"/>
    </location>
</feature>
<feature type="glycosylation site" description="N-linked (GlcNAc...) asparagine" evidence="2">
    <location>
        <position position="29"/>
    </location>
</feature>
<feature type="glycosylation site" description="N-linked (GlcNAc...) asparagine" evidence="2">
    <location>
        <position position="34"/>
    </location>
</feature>
<feature type="disulfide bond" evidence="3">
    <location>
        <begin position="117"/>
        <end position="197"/>
    </location>
</feature>
<dbReference type="EMBL" id="AB085947">
    <property type="protein sequence ID" value="BAC07180.1"/>
    <property type="molecule type" value="mRNA"/>
</dbReference>
<dbReference type="RefSeq" id="NP_776500.1">
    <property type="nucleotide sequence ID" value="NM_174075.1"/>
</dbReference>
<dbReference type="SMR" id="Q8MJV2"/>
<dbReference type="FunCoup" id="Q8MJV2">
    <property type="interactions" value="95"/>
</dbReference>
<dbReference type="STRING" id="9913.ENSBTAP00000054391"/>
<dbReference type="GlyCosmos" id="Q8MJV2">
    <property type="glycosylation" value="2 sites, No reported glycans"/>
</dbReference>
<dbReference type="GlyGen" id="Q8MJV2">
    <property type="glycosylation" value="2 sites"/>
</dbReference>
<dbReference type="PaxDb" id="9913-ENSBTAP00000054391"/>
<dbReference type="Ensembl" id="ENSBTAT00000065755.2">
    <property type="protein sequence ID" value="ENSBTAP00000054391.2"/>
    <property type="gene ID" value="ENSBTAG00000047704.2"/>
</dbReference>
<dbReference type="GeneID" id="281208"/>
<dbReference type="KEGG" id="bta:281208"/>
<dbReference type="CTD" id="2832"/>
<dbReference type="VEuPathDB" id="HostDB:ENSBTAG00000047704"/>
<dbReference type="VGNC" id="VGNC:106846">
    <property type="gene designation" value="NPBWR2"/>
</dbReference>
<dbReference type="eggNOG" id="KOG3656">
    <property type="taxonomic scope" value="Eukaryota"/>
</dbReference>
<dbReference type="GeneTree" id="ENSGT00940000163127"/>
<dbReference type="InParanoid" id="Q8MJV2"/>
<dbReference type="OMA" id="IISFCVW"/>
<dbReference type="OrthoDB" id="6076970at2759"/>
<dbReference type="Reactome" id="R-BTA-375276">
    <property type="pathway name" value="Peptide ligand-binding receptors"/>
</dbReference>
<dbReference type="Reactome" id="R-BTA-418594">
    <property type="pathway name" value="G alpha (i) signalling events"/>
</dbReference>
<dbReference type="Proteomes" id="UP000009136">
    <property type="component" value="Chromosome 13"/>
</dbReference>
<dbReference type="Bgee" id="ENSBTAG00000047704">
    <property type="expression patterns" value="Expressed in floor plate of diencephalon and 4 other cell types or tissues"/>
</dbReference>
<dbReference type="GO" id="GO:0043005">
    <property type="term" value="C:neuron projection"/>
    <property type="evidence" value="ECO:0000318"/>
    <property type="project" value="GO_Central"/>
</dbReference>
<dbReference type="GO" id="GO:0005886">
    <property type="term" value="C:plasma membrane"/>
    <property type="evidence" value="ECO:0000318"/>
    <property type="project" value="GO_Central"/>
</dbReference>
<dbReference type="GO" id="GO:0004930">
    <property type="term" value="F:G protein-coupled receptor activity"/>
    <property type="evidence" value="ECO:0000318"/>
    <property type="project" value="GO_Central"/>
</dbReference>
<dbReference type="GO" id="GO:0042923">
    <property type="term" value="F:neuropeptide binding"/>
    <property type="evidence" value="ECO:0000318"/>
    <property type="project" value="GO_Central"/>
</dbReference>
<dbReference type="GO" id="GO:0008188">
    <property type="term" value="F:neuropeptide receptor activity"/>
    <property type="evidence" value="ECO:0007669"/>
    <property type="project" value="InterPro"/>
</dbReference>
<dbReference type="GO" id="GO:0007218">
    <property type="term" value="P:neuropeptide signaling pathway"/>
    <property type="evidence" value="ECO:0000318"/>
    <property type="project" value="GO_Central"/>
</dbReference>
<dbReference type="CDD" id="cd15087">
    <property type="entry name" value="7tmA_NPBWR"/>
    <property type="match status" value="1"/>
</dbReference>
<dbReference type="FunFam" id="1.20.1070.10:FF:000102">
    <property type="entry name" value="neuropeptides B/W receptor type 1"/>
    <property type="match status" value="1"/>
</dbReference>
<dbReference type="Gene3D" id="1.20.1070.10">
    <property type="entry name" value="Rhodopsin 7-helix transmembrane proteins"/>
    <property type="match status" value="1"/>
</dbReference>
<dbReference type="InterPro" id="IPR000276">
    <property type="entry name" value="GPCR_Rhodpsn"/>
</dbReference>
<dbReference type="InterPro" id="IPR017452">
    <property type="entry name" value="GPCR_Rhodpsn_7TM"/>
</dbReference>
<dbReference type="InterPro" id="IPR009150">
    <property type="entry name" value="Neuropept_B/W_rcpt"/>
</dbReference>
<dbReference type="PANTHER" id="PTHR24229:SF18">
    <property type="entry name" value="NEUROPEPTIDES B_W RECEPTOR TYPE 2"/>
    <property type="match status" value="1"/>
</dbReference>
<dbReference type="PANTHER" id="PTHR24229">
    <property type="entry name" value="NEUROPEPTIDES RECEPTOR"/>
    <property type="match status" value="1"/>
</dbReference>
<dbReference type="Pfam" id="PF00001">
    <property type="entry name" value="7tm_1"/>
    <property type="match status" value="1"/>
</dbReference>
<dbReference type="PRINTS" id="PR00237">
    <property type="entry name" value="GPCRRHODOPSN"/>
</dbReference>
<dbReference type="PRINTS" id="PR01855">
    <property type="entry name" value="NRPEPTIDEWR"/>
</dbReference>
<dbReference type="SUPFAM" id="SSF81321">
    <property type="entry name" value="Family A G protein-coupled receptor-like"/>
    <property type="match status" value="1"/>
</dbReference>
<dbReference type="PROSITE" id="PS00237">
    <property type="entry name" value="G_PROTEIN_RECEP_F1_1"/>
    <property type="match status" value="1"/>
</dbReference>
<dbReference type="PROSITE" id="PS50262">
    <property type="entry name" value="G_PROTEIN_RECEP_F1_2"/>
    <property type="match status" value="1"/>
</dbReference>
<evidence type="ECO:0000250" key="1"/>
<evidence type="ECO:0000255" key="2"/>
<evidence type="ECO:0000255" key="3">
    <source>
        <dbReference type="PROSITE-ProRule" id="PRU00521"/>
    </source>
</evidence>
<evidence type="ECO:0000256" key="4">
    <source>
        <dbReference type="SAM" id="MobiDB-lite"/>
    </source>
</evidence>
<accession>Q8MJV2</accession>
<protein>
    <recommendedName>
        <fullName>Neuropeptides B/W receptor type 2</fullName>
    </recommendedName>
    <alternativeName>
        <fullName>G-protein coupled receptor 8</fullName>
    </alternativeName>
</protein>
<reference key="1">
    <citation type="journal article" date="2002" name="J. Biol. Chem.">
        <title>Identification of a neuropeptide modified with bromine as an endogenous ligand for GPR7.</title>
        <authorList>
            <person name="Fujii R."/>
            <person name="Yoshida H."/>
            <person name="Fukusumi S."/>
            <person name="Habata Y."/>
            <person name="Hosoya M."/>
            <person name="Kawamata Y."/>
            <person name="Yano T."/>
            <person name="Hinuma S."/>
            <person name="Kitada C."/>
            <person name="Asami T."/>
            <person name="Mori M."/>
            <person name="Fujisawa Y."/>
            <person name="Fujino M."/>
        </authorList>
    </citation>
    <scope>NUCLEOTIDE SEQUENCE [MRNA]</scope>
</reference>
<organism>
    <name type="scientific">Bos taurus</name>
    <name type="common">Bovine</name>
    <dbReference type="NCBI Taxonomy" id="9913"/>
    <lineage>
        <taxon>Eukaryota</taxon>
        <taxon>Metazoa</taxon>
        <taxon>Chordata</taxon>
        <taxon>Craniata</taxon>
        <taxon>Vertebrata</taxon>
        <taxon>Euteleostomi</taxon>
        <taxon>Mammalia</taxon>
        <taxon>Eutheria</taxon>
        <taxon>Laurasiatheria</taxon>
        <taxon>Artiodactyla</taxon>
        <taxon>Ruminantia</taxon>
        <taxon>Pecora</taxon>
        <taxon>Bovidae</taxon>
        <taxon>Bovinae</taxon>
        <taxon>Bos</taxon>
    </lineage>
</organism>
<keyword id="KW-1003">Cell membrane</keyword>
<keyword id="KW-1015">Disulfide bond</keyword>
<keyword id="KW-0297">G-protein coupled receptor</keyword>
<keyword id="KW-0325">Glycoprotein</keyword>
<keyword id="KW-0472">Membrane</keyword>
<keyword id="KW-0675">Receptor</keyword>
<keyword id="KW-1185">Reference proteome</keyword>
<keyword id="KW-0807">Transducer</keyword>
<keyword id="KW-0812">Transmembrane</keyword>
<keyword id="KW-1133">Transmembrane helix</keyword>
<proteinExistence type="evidence at transcript level"/>
<name>NPBW2_BOVIN</name>